<comment type="function">
    <text evidence="1">Binds as a heterodimer with protein bS6 to the central domain of the 16S rRNA, where it helps stabilize the platform of the 30S subunit.</text>
</comment>
<comment type="subunit">
    <text evidence="1">Part of the 30S ribosomal subunit. Forms a tight heterodimer with protein bS6.</text>
</comment>
<comment type="similarity">
    <text evidence="1">Belongs to the bacterial ribosomal protein bS18 family.</text>
</comment>
<sequence length="91" mass="10613">MARPTGKKFDKRRQQQNPLFKRKKFCRFTAAGVEQIDYKDTETLKDFIGENGKITPARLTGTKAHYQRQLDTAIKRARFLALLPYTDQHKA</sequence>
<gene>
    <name evidence="1" type="primary">rpsR</name>
    <name type="ordered locus">Bmul_1402</name>
    <name type="ordered locus">BMULJ_01841</name>
</gene>
<keyword id="KW-1185">Reference proteome</keyword>
<keyword id="KW-0687">Ribonucleoprotein</keyword>
<keyword id="KW-0689">Ribosomal protein</keyword>
<keyword id="KW-0694">RNA-binding</keyword>
<keyword id="KW-0699">rRNA-binding</keyword>
<protein>
    <recommendedName>
        <fullName evidence="1">Small ribosomal subunit protein bS18</fullName>
    </recommendedName>
    <alternativeName>
        <fullName evidence="2">30S ribosomal protein S18</fullName>
    </alternativeName>
</protein>
<feature type="chain" id="PRO_1000114406" description="Small ribosomal subunit protein bS18">
    <location>
        <begin position="1"/>
        <end position="91"/>
    </location>
</feature>
<dbReference type="EMBL" id="CP000868">
    <property type="protein sequence ID" value="ABX15090.1"/>
    <property type="molecule type" value="Genomic_DNA"/>
</dbReference>
<dbReference type="EMBL" id="AP009385">
    <property type="protein sequence ID" value="BAG43761.1"/>
    <property type="molecule type" value="Genomic_DNA"/>
</dbReference>
<dbReference type="RefSeq" id="WP_004193360.1">
    <property type="nucleotide sequence ID" value="NC_010804.1"/>
</dbReference>
<dbReference type="SMR" id="A9AJW3"/>
<dbReference type="STRING" id="395019.BMULJ_01841"/>
<dbReference type="GeneID" id="93173028"/>
<dbReference type="KEGG" id="bmj:BMULJ_01841"/>
<dbReference type="KEGG" id="bmu:Bmul_1402"/>
<dbReference type="eggNOG" id="COG0238">
    <property type="taxonomic scope" value="Bacteria"/>
</dbReference>
<dbReference type="HOGENOM" id="CLU_148710_0_3_4"/>
<dbReference type="Proteomes" id="UP000008815">
    <property type="component" value="Chromosome 1"/>
</dbReference>
<dbReference type="GO" id="GO:0022627">
    <property type="term" value="C:cytosolic small ribosomal subunit"/>
    <property type="evidence" value="ECO:0007669"/>
    <property type="project" value="TreeGrafter"/>
</dbReference>
<dbReference type="GO" id="GO:0070181">
    <property type="term" value="F:small ribosomal subunit rRNA binding"/>
    <property type="evidence" value="ECO:0007669"/>
    <property type="project" value="TreeGrafter"/>
</dbReference>
<dbReference type="GO" id="GO:0003735">
    <property type="term" value="F:structural constituent of ribosome"/>
    <property type="evidence" value="ECO:0007669"/>
    <property type="project" value="InterPro"/>
</dbReference>
<dbReference type="GO" id="GO:0006412">
    <property type="term" value="P:translation"/>
    <property type="evidence" value="ECO:0007669"/>
    <property type="project" value="UniProtKB-UniRule"/>
</dbReference>
<dbReference type="Gene3D" id="4.10.640.10">
    <property type="entry name" value="Ribosomal protein S18"/>
    <property type="match status" value="1"/>
</dbReference>
<dbReference type="HAMAP" id="MF_00270">
    <property type="entry name" value="Ribosomal_bS18"/>
    <property type="match status" value="1"/>
</dbReference>
<dbReference type="InterPro" id="IPR001648">
    <property type="entry name" value="Ribosomal_bS18"/>
</dbReference>
<dbReference type="InterPro" id="IPR018275">
    <property type="entry name" value="Ribosomal_bS18_CS"/>
</dbReference>
<dbReference type="InterPro" id="IPR036870">
    <property type="entry name" value="Ribosomal_bS18_sf"/>
</dbReference>
<dbReference type="NCBIfam" id="TIGR00165">
    <property type="entry name" value="S18"/>
    <property type="match status" value="1"/>
</dbReference>
<dbReference type="PANTHER" id="PTHR13479">
    <property type="entry name" value="30S RIBOSOMAL PROTEIN S18"/>
    <property type="match status" value="1"/>
</dbReference>
<dbReference type="PANTHER" id="PTHR13479:SF40">
    <property type="entry name" value="SMALL RIBOSOMAL SUBUNIT PROTEIN BS18M"/>
    <property type="match status" value="1"/>
</dbReference>
<dbReference type="Pfam" id="PF01084">
    <property type="entry name" value="Ribosomal_S18"/>
    <property type="match status" value="1"/>
</dbReference>
<dbReference type="PRINTS" id="PR00974">
    <property type="entry name" value="RIBOSOMALS18"/>
</dbReference>
<dbReference type="SUPFAM" id="SSF46911">
    <property type="entry name" value="Ribosomal protein S18"/>
    <property type="match status" value="1"/>
</dbReference>
<dbReference type="PROSITE" id="PS00057">
    <property type="entry name" value="RIBOSOMAL_S18"/>
    <property type="match status" value="1"/>
</dbReference>
<reference key="1">
    <citation type="submission" date="2007-10" db="EMBL/GenBank/DDBJ databases">
        <title>Complete sequence of chromosome 1 of Burkholderia multivorans ATCC 17616.</title>
        <authorList>
            <person name="Copeland A."/>
            <person name="Lucas S."/>
            <person name="Lapidus A."/>
            <person name="Barry K."/>
            <person name="Glavina del Rio T."/>
            <person name="Dalin E."/>
            <person name="Tice H."/>
            <person name="Pitluck S."/>
            <person name="Chain P."/>
            <person name="Malfatti S."/>
            <person name="Shin M."/>
            <person name="Vergez L."/>
            <person name="Schmutz J."/>
            <person name="Larimer F."/>
            <person name="Land M."/>
            <person name="Hauser L."/>
            <person name="Kyrpides N."/>
            <person name="Kim E."/>
            <person name="Tiedje J."/>
            <person name="Richardson P."/>
        </authorList>
    </citation>
    <scope>NUCLEOTIDE SEQUENCE [LARGE SCALE GENOMIC DNA]</scope>
    <source>
        <strain>ATCC 17616 / 249</strain>
    </source>
</reference>
<reference key="2">
    <citation type="submission" date="2007-04" db="EMBL/GenBank/DDBJ databases">
        <title>Complete genome sequence of Burkholderia multivorans ATCC 17616.</title>
        <authorList>
            <person name="Ohtsubo Y."/>
            <person name="Yamashita A."/>
            <person name="Kurokawa K."/>
            <person name="Takami H."/>
            <person name="Yuhara S."/>
            <person name="Nishiyama E."/>
            <person name="Endo R."/>
            <person name="Miyazaki R."/>
            <person name="Ono A."/>
            <person name="Yano K."/>
            <person name="Ito M."/>
            <person name="Sota M."/>
            <person name="Yuji N."/>
            <person name="Hattori M."/>
            <person name="Tsuda M."/>
        </authorList>
    </citation>
    <scope>NUCLEOTIDE SEQUENCE [LARGE SCALE GENOMIC DNA]</scope>
    <source>
        <strain>ATCC 17616 / 249</strain>
    </source>
</reference>
<evidence type="ECO:0000255" key="1">
    <source>
        <dbReference type="HAMAP-Rule" id="MF_00270"/>
    </source>
</evidence>
<evidence type="ECO:0000305" key="2"/>
<accession>A9AJW3</accession>
<proteinExistence type="inferred from homology"/>
<organism>
    <name type="scientific">Burkholderia multivorans (strain ATCC 17616 / 249)</name>
    <dbReference type="NCBI Taxonomy" id="395019"/>
    <lineage>
        <taxon>Bacteria</taxon>
        <taxon>Pseudomonadati</taxon>
        <taxon>Pseudomonadota</taxon>
        <taxon>Betaproteobacteria</taxon>
        <taxon>Burkholderiales</taxon>
        <taxon>Burkholderiaceae</taxon>
        <taxon>Burkholderia</taxon>
        <taxon>Burkholderia cepacia complex</taxon>
    </lineage>
</organism>
<name>RS18_BURM1</name>